<protein>
    <recommendedName>
        <fullName>5,10-methylenetetrahydromethanopterin reductase</fullName>
        <ecNumber evidence="1">1.5.98.2</ecNumber>
    </recommendedName>
    <alternativeName>
        <fullName>Coenzyme F420-dependent N(5),N(10)-methylenetetrahydromethanopterin reductase</fullName>
    </alternativeName>
    <alternativeName>
        <fullName>Methylene-H(4)MPT reductase</fullName>
    </alternativeName>
</protein>
<accession>O27784</accession>
<accession>Q50540</accession>
<name>MER_METTH</name>
<evidence type="ECO:0000269" key="1">
    <source>
    </source>
</evidence>
<evidence type="ECO:0000269" key="2">
    <source>
    </source>
</evidence>
<evidence type="ECO:0000303" key="3">
    <source>
    </source>
</evidence>
<evidence type="ECO:0000305" key="4"/>
<evidence type="ECO:0000312" key="5">
    <source>
        <dbReference type="EMBL" id="AAB86222.1"/>
    </source>
</evidence>
<dbReference type="EC" id="1.5.98.2" evidence="1"/>
<dbReference type="EMBL" id="U31568">
    <property type="protein sequence ID" value="AAA92087.1"/>
    <property type="molecule type" value="Genomic_DNA"/>
</dbReference>
<dbReference type="EMBL" id="AE000666">
    <property type="protein sequence ID" value="AAB86222.1"/>
    <property type="molecule type" value="Genomic_DNA"/>
</dbReference>
<dbReference type="PIR" id="D69101">
    <property type="entry name" value="D69101"/>
</dbReference>
<dbReference type="RefSeq" id="WP_010877358.1">
    <property type="nucleotide sequence ID" value="NC_000916.1"/>
</dbReference>
<dbReference type="SMR" id="O27784"/>
<dbReference type="FunCoup" id="O27784">
    <property type="interactions" value="66"/>
</dbReference>
<dbReference type="STRING" id="187420.MTH_1752"/>
<dbReference type="PaxDb" id="187420-MTH_1752"/>
<dbReference type="EnsemblBacteria" id="AAB86222">
    <property type="protein sequence ID" value="AAB86222"/>
    <property type="gene ID" value="MTH_1752"/>
</dbReference>
<dbReference type="GeneID" id="82298181"/>
<dbReference type="KEGG" id="mth:MTH_1752"/>
<dbReference type="PATRIC" id="fig|187420.15.peg.1712"/>
<dbReference type="HOGENOM" id="CLU_027853_5_3_2"/>
<dbReference type="InParanoid" id="O27784"/>
<dbReference type="BioCyc" id="MetaCyc:MERMAUTO-MONOMER"/>
<dbReference type="UniPathway" id="UPA00640">
    <property type="reaction ID" value="UER00697"/>
</dbReference>
<dbReference type="Proteomes" id="UP000005223">
    <property type="component" value="Chromosome"/>
</dbReference>
<dbReference type="GO" id="GO:0005737">
    <property type="term" value="C:cytoplasm"/>
    <property type="evidence" value="ECO:0007669"/>
    <property type="project" value="UniProtKB-SubCell"/>
</dbReference>
<dbReference type="GO" id="GO:0018537">
    <property type="term" value="F:coenzyme F420-dependent N5,N10-methenyltetrahydromethanopterin reductase activity"/>
    <property type="evidence" value="ECO:0007669"/>
    <property type="project" value="UniProtKB-UniRule"/>
</dbReference>
<dbReference type="GO" id="GO:0016705">
    <property type="term" value="F:oxidoreductase activity, acting on paired donors, with incorporation or reduction of molecular oxygen"/>
    <property type="evidence" value="ECO:0007669"/>
    <property type="project" value="InterPro"/>
</dbReference>
<dbReference type="GO" id="GO:0019386">
    <property type="term" value="P:methanogenesis, from carbon dioxide"/>
    <property type="evidence" value="ECO:0007669"/>
    <property type="project" value="UniProtKB-UniRule"/>
</dbReference>
<dbReference type="GO" id="GO:0006730">
    <property type="term" value="P:one-carbon metabolic process"/>
    <property type="evidence" value="ECO:0007669"/>
    <property type="project" value="UniProtKB-UniRule"/>
</dbReference>
<dbReference type="CDD" id="cd01097">
    <property type="entry name" value="Tetrahydromethanopterin_reductase"/>
    <property type="match status" value="1"/>
</dbReference>
<dbReference type="FunFam" id="3.20.20.30:FF:000027">
    <property type="entry name" value="5,10-methylenetetrahydromethanopterin reductase"/>
    <property type="match status" value="1"/>
</dbReference>
<dbReference type="Gene3D" id="3.20.20.30">
    <property type="entry name" value="Luciferase-like domain"/>
    <property type="match status" value="1"/>
</dbReference>
<dbReference type="HAMAP" id="MF_01091">
    <property type="entry name" value="F420_mer"/>
    <property type="match status" value="1"/>
</dbReference>
<dbReference type="InterPro" id="IPR050564">
    <property type="entry name" value="F420-G6PD/mer"/>
</dbReference>
<dbReference type="InterPro" id="IPR011251">
    <property type="entry name" value="Luciferase-like_dom"/>
</dbReference>
<dbReference type="InterPro" id="IPR036661">
    <property type="entry name" value="Luciferase-like_sf"/>
</dbReference>
<dbReference type="InterPro" id="IPR019946">
    <property type="entry name" value="MeH4methanopterin_reductase"/>
</dbReference>
<dbReference type="NCBIfam" id="TIGR03555">
    <property type="entry name" value="F420_mer"/>
    <property type="match status" value="1"/>
</dbReference>
<dbReference type="NCBIfam" id="NF002619">
    <property type="entry name" value="PRK02271.1"/>
    <property type="match status" value="1"/>
</dbReference>
<dbReference type="PANTHER" id="PTHR43244">
    <property type="match status" value="1"/>
</dbReference>
<dbReference type="PANTHER" id="PTHR43244:SF1">
    <property type="entry name" value="5,10-METHYLENETETRAHYDROMETHANOPTERIN REDUCTASE"/>
    <property type="match status" value="1"/>
</dbReference>
<dbReference type="Pfam" id="PF00296">
    <property type="entry name" value="Bac_luciferase"/>
    <property type="match status" value="1"/>
</dbReference>
<dbReference type="SUPFAM" id="SSF51679">
    <property type="entry name" value="Bacterial luciferase-like"/>
    <property type="match status" value="1"/>
</dbReference>
<proteinExistence type="evidence at protein level"/>
<comment type="function">
    <text evidence="1">Catalyzes the reversible reduction of methylene-H(4)MPT to methyl-H(4)MPT.</text>
</comment>
<comment type="catalytic activity">
    <reaction evidence="1">
        <text>5-methyl-5,6,7,8-tetrahydromethanopterin + oxidized coenzyme F420-(gamma-L-Glu)(n) + H(+) = 5,10-methylenetetrahydromethanopterin + reduced coenzyme F420-(gamma-L-Glu)(n)</text>
        <dbReference type="Rhea" id="RHEA:21144"/>
        <dbReference type="Rhea" id="RHEA-COMP:12939"/>
        <dbReference type="Rhea" id="RHEA-COMP:14378"/>
        <dbReference type="ChEBI" id="CHEBI:15378"/>
        <dbReference type="ChEBI" id="CHEBI:57818"/>
        <dbReference type="ChEBI" id="CHEBI:58116"/>
        <dbReference type="ChEBI" id="CHEBI:133980"/>
        <dbReference type="ChEBI" id="CHEBI:139511"/>
        <dbReference type="EC" id="1.5.98.2"/>
    </reaction>
</comment>
<comment type="biophysicochemical properties">
    <phDependence>
        <text evidence="1">Optimum pH is 7.</text>
    </phDependence>
    <temperatureDependence>
        <text evidence="1">Optimum temperature is 40 degrees Celsius.</text>
    </temperatureDependence>
</comment>
<comment type="pathway">
    <text evidence="1">One-carbon metabolism; methanogenesis from CO(2); methyl-coenzyme M from 5,10-methylene-5,6,7,8-tetrahydromethanopterin: step 1/2.</text>
</comment>
<comment type="subcellular location">
    <subcellularLocation>
        <location evidence="4">Cytoplasm</location>
    </subcellularLocation>
</comment>
<comment type="induction">
    <text evidence="2">Increase in abundance from the earliest stages of exponential growth, reaching a maximum level at the mid-exponential growth phase.</text>
</comment>
<comment type="miscellaneous">
    <text evidence="1">Oxygen-stable.</text>
</comment>
<comment type="similarity">
    <text evidence="4">Belongs to the mer family.</text>
</comment>
<organism>
    <name type="scientific">Methanothermobacter thermautotrophicus (strain ATCC 29096 / DSM 1053 / JCM 10044 / NBRC 100330 / Delta H)</name>
    <name type="common">Methanobacterium thermoautotrophicum</name>
    <dbReference type="NCBI Taxonomy" id="187420"/>
    <lineage>
        <taxon>Archaea</taxon>
        <taxon>Methanobacteriati</taxon>
        <taxon>Methanobacteriota</taxon>
        <taxon>Methanomada group</taxon>
        <taxon>Methanobacteria</taxon>
        <taxon>Methanobacteriales</taxon>
        <taxon>Methanobacteriaceae</taxon>
        <taxon>Methanothermobacter</taxon>
    </lineage>
</organism>
<gene>
    <name evidence="3" type="primary">mer</name>
    <name evidence="5" type="ordered locus">MTH_1752</name>
</gene>
<sequence length="321" mass="33479">MKFGIEFVPNEPIEKIVKLVKLAEDVGFEYAWITDHYNNKNVYETLALIAEGTETIKLGPGVTNPYVRSPAITASAIATLDELSNGRATLGIGPGDKATFDALGIEWVKPVSTIRDAIAMMRTLLAGEKTESGAQLMGVKAVQEKIPIYMGAQGPMMLKTAGEISDGALINASNPKDFEAAVPLIKEGAESAGKSLSDIDVAAYTCCSIDEDSAAAANAAKIVVAFIAAGSPPPVFERHGLPADTGAKFGELLGKGDFGGAIGAVDDALMEAFSVVGTPDEFIPKIEALGEMGVTQYVAGSPIGPDKEKSIKLLGEVIASF</sequence>
<reference key="1">
    <citation type="journal article" date="1995" name="J. Bacteriol.">
        <title>Cloning, sequencing, and growth phase-dependent transcription of the coenzyme F420-dependent N5,N10-methylenetetrahydromethanopterin reductase-encoding genes from Methanobacterium thermoautotrophicum delta H and Methanopyrus kandleri.</title>
        <authorList>
            <person name="Noelling J."/>
            <person name="Pihl T.D."/>
            <person name="Reeve J.N."/>
        </authorList>
    </citation>
    <scope>NUCLEOTIDE SEQUENCE [GENOMIC DNA]</scope>
    <scope>INDUCTION</scope>
    <source>
        <strain>ATCC 29096 / DSM 1053 / JCM 10044 / NBRC 100330 / Delta H</strain>
    </source>
</reference>
<reference key="2">
    <citation type="journal article" date="1997" name="J. Bacteriol.">
        <title>Complete genome sequence of Methanobacterium thermoautotrophicum deltaH: functional analysis and comparative genomics.</title>
        <authorList>
            <person name="Smith D.R."/>
            <person name="Doucette-Stamm L.A."/>
            <person name="Deloughery C."/>
            <person name="Lee H.-M."/>
            <person name="Dubois J."/>
            <person name="Aldredge T."/>
            <person name="Bashirzadeh R."/>
            <person name="Blakely D."/>
            <person name="Cook R."/>
            <person name="Gilbert K."/>
            <person name="Harrison D."/>
            <person name="Hoang L."/>
            <person name="Keagle P."/>
            <person name="Lumm W."/>
            <person name="Pothier B."/>
            <person name="Qiu D."/>
            <person name="Spadafora R."/>
            <person name="Vicare R."/>
            <person name="Wang Y."/>
            <person name="Wierzbowski J."/>
            <person name="Gibson R."/>
            <person name="Jiwani N."/>
            <person name="Caruso A."/>
            <person name="Bush D."/>
            <person name="Safer H."/>
            <person name="Patwell D."/>
            <person name="Prabhakar S."/>
            <person name="McDougall S."/>
            <person name="Shimer G."/>
            <person name="Goyal A."/>
            <person name="Pietrovski S."/>
            <person name="Church G.M."/>
            <person name="Daniels C.J."/>
            <person name="Mao J.-I."/>
            <person name="Rice P."/>
            <person name="Noelling J."/>
            <person name="Reeve J.N."/>
        </authorList>
    </citation>
    <scope>NUCLEOTIDE SEQUENCE [LARGE SCALE GENOMIC DNA]</scope>
    <source>
        <strain>ATCC 29096 / DSM 1053 / JCM 10044 / NBRC 100330 / Delta H</strain>
    </source>
</reference>
<reference key="3">
    <citation type="journal article" date="1990" name="J. Biol. Chem.">
        <title>Purification and properties of 5,10-methylenetetrahydromethanopterin reductase, a coenzyme F420-dependent enzyme, from Methanobacterium thermoautotrophicum strain delta H.</title>
        <authorList>
            <person name="te Broemmelstroet B.W."/>
            <person name="Hensgens C.M.H."/>
            <person name="Keltjens J.T."/>
            <person name="van der Drift C."/>
            <person name="Vogels G.D."/>
        </authorList>
    </citation>
    <scope>FUNCTION</scope>
    <scope>CATALYTIC ACTIVITY</scope>
    <scope>BIOPHYSICOCHEMICAL PROPERTIES</scope>
    <scope>PATHWAY</scope>
    <source>
        <strain>ATCC 29096 / DSM 1053 / JCM 10044 / NBRC 100330 / Delta H</strain>
    </source>
</reference>
<keyword id="KW-0963">Cytoplasm</keyword>
<keyword id="KW-0484">Methanogenesis</keyword>
<keyword id="KW-0554">One-carbon metabolism</keyword>
<keyword id="KW-0560">Oxidoreductase</keyword>
<keyword id="KW-1185">Reference proteome</keyword>
<feature type="chain" id="PRO_0000084810" description="5,10-methylenetetrahydromethanopterin reductase">
    <location>
        <begin position="1"/>
        <end position="321"/>
    </location>
</feature>
<feature type="sequence conflict" description="In Ref. 1; AAA92087." evidence="4" ref="1">
    <original>L</original>
    <variation>H</variation>
    <location>
        <position position="313"/>
    </location>
</feature>